<gene>
    <name evidence="1" type="primary">tsaD</name>
    <name type="synonym">gcp</name>
    <name type="ordered locus">Sca_1555</name>
</gene>
<evidence type="ECO:0000255" key="1">
    <source>
        <dbReference type="HAMAP-Rule" id="MF_01445"/>
    </source>
</evidence>
<feature type="chain" id="PRO_1000184980" description="tRNA N6-adenosine threonylcarbamoyltransferase">
    <location>
        <begin position="1"/>
        <end position="343"/>
    </location>
</feature>
<feature type="binding site" evidence="1">
    <location>
        <position position="115"/>
    </location>
    <ligand>
        <name>Fe cation</name>
        <dbReference type="ChEBI" id="CHEBI:24875"/>
    </ligand>
</feature>
<feature type="binding site" evidence="1">
    <location>
        <position position="119"/>
    </location>
    <ligand>
        <name>Fe cation</name>
        <dbReference type="ChEBI" id="CHEBI:24875"/>
    </ligand>
</feature>
<feature type="binding site" evidence="1">
    <location>
        <begin position="137"/>
        <end position="141"/>
    </location>
    <ligand>
        <name>substrate</name>
    </ligand>
</feature>
<feature type="binding site" evidence="1">
    <location>
        <position position="170"/>
    </location>
    <ligand>
        <name>substrate</name>
    </ligand>
</feature>
<feature type="binding site" evidence="1">
    <location>
        <position position="183"/>
    </location>
    <ligand>
        <name>substrate</name>
    </ligand>
</feature>
<feature type="binding site" evidence="1">
    <location>
        <position position="187"/>
    </location>
    <ligand>
        <name>substrate</name>
    </ligand>
</feature>
<feature type="binding site" evidence="1">
    <location>
        <position position="276"/>
    </location>
    <ligand>
        <name>substrate</name>
    </ligand>
</feature>
<feature type="binding site" evidence="1">
    <location>
        <position position="304"/>
    </location>
    <ligand>
        <name>Fe cation</name>
        <dbReference type="ChEBI" id="CHEBI:24875"/>
    </ligand>
</feature>
<protein>
    <recommendedName>
        <fullName evidence="1">tRNA N6-adenosine threonylcarbamoyltransferase</fullName>
        <ecNumber evidence="1">2.3.1.234</ecNumber>
    </recommendedName>
    <alternativeName>
        <fullName evidence="1">N6-L-threonylcarbamoyladenine synthase</fullName>
        <shortName evidence="1">t(6)A synthase</shortName>
    </alternativeName>
    <alternativeName>
        <fullName evidence="1">t(6)A37 threonylcarbamoyladenosine biosynthesis protein TsaD</fullName>
    </alternativeName>
    <alternativeName>
        <fullName evidence="1">tRNA threonylcarbamoyladenosine biosynthesis protein TsaD</fullName>
    </alternativeName>
</protein>
<proteinExistence type="inferred from homology"/>
<comment type="function">
    <text evidence="1">Required for the formation of a threonylcarbamoyl group on adenosine at position 37 (t(6)A37) in tRNAs that read codons beginning with adenine. Is involved in the transfer of the threonylcarbamoyl moiety of threonylcarbamoyl-AMP (TC-AMP) to the N6 group of A37, together with TsaE and TsaB. TsaD likely plays a direct catalytic role in this reaction.</text>
</comment>
<comment type="catalytic activity">
    <reaction evidence="1">
        <text>L-threonylcarbamoyladenylate + adenosine(37) in tRNA = N(6)-L-threonylcarbamoyladenosine(37) in tRNA + AMP + H(+)</text>
        <dbReference type="Rhea" id="RHEA:37059"/>
        <dbReference type="Rhea" id="RHEA-COMP:10162"/>
        <dbReference type="Rhea" id="RHEA-COMP:10163"/>
        <dbReference type="ChEBI" id="CHEBI:15378"/>
        <dbReference type="ChEBI" id="CHEBI:73682"/>
        <dbReference type="ChEBI" id="CHEBI:74411"/>
        <dbReference type="ChEBI" id="CHEBI:74418"/>
        <dbReference type="ChEBI" id="CHEBI:456215"/>
        <dbReference type="EC" id="2.3.1.234"/>
    </reaction>
</comment>
<comment type="cofactor">
    <cofactor evidence="1">
        <name>Fe(2+)</name>
        <dbReference type="ChEBI" id="CHEBI:29033"/>
    </cofactor>
    <text evidence="1">Binds 1 Fe(2+) ion per subunit.</text>
</comment>
<comment type="subcellular location">
    <subcellularLocation>
        <location evidence="1">Cytoplasm</location>
    </subcellularLocation>
</comment>
<comment type="similarity">
    <text evidence="1">Belongs to the KAE1 / TsaD family.</text>
</comment>
<accession>B9DML1</accession>
<reference key="1">
    <citation type="journal article" date="2009" name="Appl. Environ. Microbiol.">
        <title>Genome analysis of the meat starter culture bacterium Staphylococcus carnosus TM300.</title>
        <authorList>
            <person name="Rosenstein R."/>
            <person name="Nerz C."/>
            <person name="Biswas L."/>
            <person name="Resch A."/>
            <person name="Raddatz G."/>
            <person name="Schuster S.C."/>
            <person name="Goetz F."/>
        </authorList>
    </citation>
    <scope>NUCLEOTIDE SEQUENCE [LARGE SCALE GENOMIC DNA]</scope>
    <source>
        <strain>TM300</strain>
    </source>
</reference>
<dbReference type="EC" id="2.3.1.234" evidence="1"/>
<dbReference type="EMBL" id="AM295250">
    <property type="protein sequence ID" value="CAL28460.1"/>
    <property type="molecule type" value="Genomic_DNA"/>
</dbReference>
<dbReference type="RefSeq" id="WP_015900800.1">
    <property type="nucleotide sequence ID" value="NC_012121.1"/>
</dbReference>
<dbReference type="SMR" id="B9DML1"/>
<dbReference type="GeneID" id="93794005"/>
<dbReference type="KEGG" id="sca:SCA_1555"/>
<dbReference type="eggNOG" id="COG0533">
    <property type="taxonomic scope" value="Bacteria"/>
</dbReference>
<dbReference type="HOGENOM" id="CLU_023208_0_2_9"/>
<dbReference type="OrthoDB" id="9806197at2"/>
<dbReference type="BioCyc" id="SCAR396513:SCA_RS07880-MONOMER"/>
<dbReference type="Proteomes" id="UP000000444">
    <property type="component" value="Chromosome"/>
</dbReference>
<dbReference type="GO" id="GO:0005737">
    <property type="term" value="C:cytoplasm"/>
    <property type="evidence" value="ECO:0007669"/>
    <property type="project" value="UniProtKB-SubCell"/>
</dbReference>
<dbReference type="GO" id="GO:0005506">
    <property type="term" value="F:iron ion binding"/>
    <property type="evidence" value="ECO:0007669"/>
    <property type="project" value="UniProtKB-UniRule"/>
</dbReference>
<dbReference type="GO" id="GO:0061711">
    <property type="term" value="F:N(6)-L-threonylcarbamoyladenine synthase activity"/>
    <property type="evidence" value="ECO:0007669"/>
    <property type="project" value="UniProtKB-EC"/>
</dbReference>
<dbReference type="GO" id="GO:0002949">
    <property type="term" value="P:tRNA threonylcarbamoyladenosine modification"/>
    <property type="evidence" value="ECO:0007669"/>
    <property type="project" value="UniProtKB-UniRule"/>
</dbReference>
<dbReference type="CDD" id="cd24133">
    <property type="entry name" value="ASKHA_NBD_TsaD_bac"/>
    <property type="match status" value="1"/>
</dbReference>
<dbReference type="FunFam" id="3.30.420.40:FF:000012">
    <property type="entry name" value="tRNA N6-adenosine threonylcarbamoyltransferase"/>
    <property type="match status" value="1"/>
</dbReference>
<dbReference type="FunFam" id="3.30.420.40:FF:000040">
    <property type="entry name" value="tRNA N6-adenosine threonylcarbamoyltransferase"/>
    <property type="match status" value="1"/>
</dbReference>
<dbReference type="Gene3D" id="3.30.420.40">
    <property type="match status" value="2"/>
</dbReference>
<dbReference type="HAMAP" id="MF_01445">
    <property type="entry name" value="TsaD"/>
    <property type="match status" value="1"/>
</dbReference>
<dbReference type="InterPro" id="IPR043129">
    <property type="entry name" value="ATPase_NBD"/>
</dbReference>
<dbReference type="InterPro" id="IPR000905">
    <property type="entry name" value="Gcp-like_dom"/>
</dbReference>
<dbReference type="InterPro" id="IPR017861">
    <property type="entry name" value="KAE1/TsaD"/>
</dbReference>
<dbReference type="InterPro" id="IPR017860">
    <property type="entry name" value="Peptidase_M22_CS"/>
</dbReference>
<dbReference type="InterPro" id="IPR022450">
    <property type="entry name" value="TsaD"/>
</dbReference>
<dbReference type="NCBIfam" id="TIGR00329">
    <property type="entry name" value="gcp_kae1"/>
    <property type="match status" value="1"/>
</dbReference>
<dbReference type="NCBIfam" id="TIGR03723">
    <property type="entry name" value="T6A_TsaD_YgjD"/>
    <property type="match status" value="1"/>
</dbReference>
<dbReference type="PANTHER" id="PTHR11735">
    <property type="entry name" value="TRNA N6-ADENOSINE THREONYLCARBAMOYLTRANSFERASE"/>
    <property type="match status" value="1"/>
</dbReference>
<dbReference type="PANTHER" id="PTHR11735:SF6">
    <property type="entry name" value="TRNA N6-ADENOSINE THREONYLCARBAMOYLTRANSFERASE, MITOCHONDRIAL"/>
    <property type="match status" value="1"/>
</dbReference>
<dbReference type="Pfam" id="PF00814">
    <property type="entry name" value="TsaD"/>
    <property type="match status" value="1"/>
</dbReference>
<dbReference type="PRINTS" id="PR00789">
    <property type="entry name" value="OSIALOPTASE"/>
</dbReference>
<dbReference type="SUPFAM" id="SSF53067">
    <property type="entry name" value="Actin-like ATPase domain"/>
    <property type="match status" value="2"/>
</dbReference>
<dbReference type="PROSITE" id="PS01016">
    <property type="entry name" value="GLYCOPROTEASE"/>
    <property type="match status" value="1"/>
</dbReference>
<keyword id="KW-0012">Acyltransferase</keyword>
<keyword id="KW-0963">Cytoplasm</keyword>
<keyword id="KW-0408">Iron</keyword>
<keyword id="KW-0479">Metal-binding</keyword>
<keyword id="KW-1185">Reference proteome</keyword>
<keyword id="KW-0808">Transferase</keyword>
<keyword id="KW-0819">tRNA processing</keyword>
<name>TSAD_STACT</name>
<organism>
    <name type="scientific">Staphylococcus carnosus (strain TM300)</name>
    <dbReference type="NCBI Taxonomy" id="396513"/>
    <lineage>
        <taxon>Bacteria</taxon>
        <taxon>Bacillati</taxon>
        <taxon>Bacillota</taxon>
        <taxon>Bacilli</taxon>
        <taxon>Bacillales</taxon>
        <taxon>Staphylococcaceae</taxon>
        <taxon>Staphylococcus</taxon>
    </lineage>
</organism>
<sequence>MSKDTLILAIESSCDETSASVIKNGKEILSNTVLSQIESHKRFGGVVPEVASRHHVEGITTTIEEALNTADTSMEEIDAVAVTEGPGLIGALLIGINAAKALAFAYDKPLVPVHHIAGHIYANNLEEPFEFPLMALIVSGGHTELVYMKDHLSFEVIGETRDDAVGEAYDKVARTIGLSYPGGPQVDKLAAEGEDTYDFPRVWLEQDSFDFSFSGLKSAVINKLHNLKQKNEAIIPENVATSFQNSVVEVLVGKAIKACETYNVHQLIVAGGVASNKGLRQELKKACAEHDIKLSIPSPKLCTDNAAMIGAAGHYMYEAGMRSDMHLNGHSSLDIEDFSVEKE</sequence>